<comment type="similarity">
    <text evidence="1">Belongs to the bacterial ribosomal protein bS21 family.</text>
</comment>
<dbReference type="EMBL" id="CP000271">
    <property type="protein sequence ID" value="ABE33172.1"/>
    <property type="molecule type" value="Genomic_DNA"/>
</dbReference>
<dbReference type="SMR" id="Q13RW7"/>
<dbReference type="STRING" id="266265.Bxe_B2823"/>
<dbReference type="KEGG" id="bxb:DR64_5152"/>
<dbReference type="KEGG" id="bxe:Bxe_B2823"/>
<dbReference type="eggNOG" id="COG0828">
    <property type="taxonomic scope" value="Bacteria"/>
</dbReference>
<dbReference type="OrthoDB" id="9799244at2"/>
<dbReference type="Proteomes" id="UP000001817">
    <property type="component" value="Chromosome 2"/>
</dbReference>
<dbReference type="GO" id="GO:1990904">
    <property type="term" value="C:ribonucleoprotein complex"/>
    <property type="evidence" value="ECO:0007669"/>
    <property type="project" value="UniProtKB-KW"/>
</dbReference>
<dbReference type="GO" id="GO:0005840">
    <property type="term" value="C:ribosome"/>
    <property type="evidence" value="ECO:0007669"/>
    <property type="project" value="UniProtKB-KW"/>
</dbReference>
<dbReference type="GO" id="GO:0003735">
    <property type="term" value="F:structural constituent of ribosome"/>
    <property type="evidence" value="ECO:0007669"/>
    <property type="project" value="InterPro"/>
</dbReference>
<dbReference type="GO" id="GO:0006412">
    <property type="term" value="P:translation"/>
    <property type="evidence" value="ECO:0007669"/>
    <property type="project" value="UniProtKB-UniRule"/>
</dbReference>
<dbReference type="Gene3D" id="1.20.5.1150">
    <property type="entry name" value="Ribosomal protein S8"/>
    <property type="match status" value="1"/>
</dbReference>
<dbReference type="HAMAP" id="MF_00358">
    <property type="entry name" value="Ribosomal_bS21"/>
    <property type="match status" value="1"/>
</dbReference>
<dbReference type="InterPro" id="IPR001911">
    <property type="entry name" value="Ribosomal_bS21"/>
</dbReference>
<dbReference type="InterPro" id="IPR038380">
    <property type="entry name" value="Ribosomal_bS21_sf"/>
</dbReference>
<dbReference type="NCBIfam" id="TIGR00030">
    <property type="entry name" value="S21p"/>
    <property type="match status" value="1"/>
</dbReference>
<dbReference type="PANTHER" id="PTHR21109">
    <property type="entry name" value="MITOCHONDRIAL 28S RIBOSOMAL PROTEIN S21"/>
    <property type="match status" value="1"/>
</dbReference>
<dbReference type="PANTHER" id="PTHR21109:SF22">
    <property type="entry name" value="SMALL RIBOSOMAL SUBUNIT PROTEIN BS21"/>
    <property type="match status" value="1"/>
</dbReference>
<dbReference type="Pfam" id="PF01165">
    <property type="entry name" value="Ribosomal_S21"/>
    <property type="match status" value="1"/>
</dbReference>
<dbReference type="PRINTS" id="PR00976">
    <property type="entry name" value="RIBOSOMALS21"/>
</dbReference>
<protein>
    <recommendedName>
        <fullName evidence="1">Small ribosomal subunit protein bS21B</fullName>
    </recommendedName>
    <alternativeName>
        <fullName evidence="2">30S ribosomal protein S21 2</fullName>
    </alternativeName>
</protein>
<gene>
    <name evidence="1" type="primary">rpsU2</name>
    <name type="ordered locus">Bxeno_B0204</name>
    <name type="ORF">Bxe_B2823</name>
</gene>
<organism>
    <name type="scientific">Paraburkholderia xenovorans (strain LB400)</name>
    <dbReference type="NCBI Taxonomy" id="266265"/>
    <lineage>
        <taxon>Bacteria</taxon>
        <taxon>Pseudomonadati</taxon>
        <taxon>Pseudomonadota</taxon>
        <taxon>Betaproteobacteria</taxon>
        <taxon>Burkholderiales</taxon>
        <taxon>Burkholderiaceae</taxon>
        <taxon>Paraburkholderia</taxon>
    </lineage>
</organism>
<feature type="chain" id="PRO_0000266648" description="Small ribosomal subunit protein bS21B">
    <location>
        <begin position="1"/>
        <end position="70"/>
    </location>
</feature>
<sequence length="70" mass="8546">MTTIRVKDNEPFEVAMRRFKRTMEKTGLLTELRAREFYEKPTAERKRKKAAAVKRHFKRLRGQMLPKKFY</sequence>
<keyword id="KW-1185">Reference proteome</keyword>
<keyword id="KW-0687">Ribonucleoprotein</keyword>
<keyword id="KW-0689">Ribosomal protein</keyword>
<accession>Q13RW7</accession>
<reference key="1">
    <citation type="journal article" date="2006" name="Proc. Natl. Acad. Sci. U.S.A.">
        <title>Burkholderia xenovorans LB400 harbors a multi-replicon, 9.73-Mbp genome shaped for versatility.</title>
        <authorList>
            <person name="Chain P.S.G."/>
            <person name="Denef V.J."/>
            <person name="Konstantinidis K.T."/>
            <person name="Vergez L.M."/>
            <person name="Agullo L."/>
            <person name="Reyes V.L."/>
            <person name="Hauser L."/>
            <person name="Cordova M."/>
            <person name="Gomez L."/>
            <person name="Gonzalez M."/>
            <person name="Land M."/>
            <person name="Lao V."/>
            <person name="Larimer F."/>
            <person name="LiPuma J.J."/>
            <person name="Mahenthiralingam E."/>
            <person name="Malfatti S.A."/>
            <person name="Marx C.J."/>
            <person name="Parnell J.J."/>
            <person name="Ramette A."/>
            <person name="Richardson P."/>
            <person name="Seeger M."/>
            <person name="Smith D."/>
            <person name="Spilker T."/>
            <person name="Sul W.J."/>
            <person name="Tsoi T.V."/>
            <person name="Ulrich L.E."/>
            <person name="Zhulin I.B."/>
            <person name="Tiedje J.M."/>
        </authorList>
    </citation>
    <scope>NUCLEOTIDE SEQUENCE [LARGE SCALE GENOMIC DNA]</scope>
    <source>
        <strain>LB400</strain>
    </source>
</reference>
<name>RS212_PARXL</name>
<proteinExistence type="inferred from homology"/>
<evidence type="ECO:0000255" key="1">
    <source>
        <dbReference type="HAMAP-Rule" id="MF_00358"/>
    </source>
</evidence>
<evidence type="ECO:0000305" key="2"/>